<proteinExistence type="inferred from homology"/>
<name>SLYX_SHEB8</name>
<feature type="chain" id="PRO_1000045733" description="Protein SlyX homolog">
    <location>
        <begin position="1"/>
        <end position="70"/>
    </location>
</feature>
<dbReference type="EMBL" id="CP000753">
    <property type="protein sequence ID" value="ABS09602.1"/>
    <property type="molecule type" value="Genomic_DNA"/>
</dbReference>
<dbReference type="RefSeq" id="WP_006080410.1">
    <property type="nucleotide sequence ID" value="NC_009665.1"/>
</dbReference>
<dbReference type="SMR" id="A6WS13"/>
<dbReference type="KEGG" id="sbm:Shew185_3475"/>
<dbReference type="HOGENOM" id="CLU_180796_4_0_6"/>
<dbReference type="Gene3D" id="1.20.5.300">
    <property type="match status" value="1"/>
</dbReference>
<dbReference type="HAMAP" id="MF_00715">
    <property type="entry name" value="SlyX"/>
    <property type="match status" value="1"/>
</dbReference>
<dbReference type="InterPro" id="IPR007236">
    <property type="entry name" value="SlyX"/>
</dbReference>
<dbReference type="PANTHER" id="PTHR36508">
    <property type="entry name" value="PROTEIN SLYX"/>
    <property type="match status" value="1"/>
</dbReference>
<dbReference type="PANTHER" id="PTHR36508:SF1">
    <property type="entry name" value="PROTEIN SLYX"/>
    <property type="match status" value="1"/>
</dbReference>
<dbReference type="Pfam" id="PF04102">
    <property type="entry name" value="SlyX"/>
    <property type="match status" value="1"/>
</dbReference>
<evidence type="ECO:0000255" key="1">
    <source>
        <dbReference type="HAMAP-Rule" id="MF_00715"/>
    </source>
</evidence>
<protein>
    <recommendedName>
        <fullName evidence="1">Protein SlyX homolog</fullName>
    </recommendedName>
</protein>
<comment type="similarity">
    <text evidence="1">Belongs to the SlyX family.</text>
</comment>
<gene>
    <name evidence="1" type="primary">slyX</name>
    <name type="ordered locus">Shew185_3475</name>
</gene>
<accession>A6WS13</accession>
<organism>
    <name type="scientific">Shewanella baltica (strain OS185)</name>
    <dbReference type="NCBI Taxonomy" id="402882"/>
    <lineage>
        <taxon>Bacteria</taxon>
        <taxon>Pseudomonadati</taxon>
        <taxon>Pseudomonadota</taxon>
        <taxon>Gammaproteobacteria</taxon>
        <taxon>Alteromonadales</taxon>
        <taxon>Shewanellaceae</taxon>
        <taxon>Shewanella</taxon>
    </lineage>
</organism>
<sequence length="70" mass="8062">MQGVQAQIEDLETKLAFQELTVEELNQEVIKLNRLVAHQQHQIHMLIGKLQDMEPSNMATQAEETPPPHY</sequence>
<reference key="1">
    <citation type="submission" date="2007-07" db="EMBL/GenBank/DDBJ databases">
        <title>Complete sequence of chromosome of Shewanella baltica OS185.</title>
        <authorList>
            <consortium name="US DOE Joint Genome Institute"/>
            <person name="Copeland A."/>
            <person name="Lucas S."/>
            <person name="Lapidus A."/>
            <person name="Barry K."/>
            <person name="Glavina del Rio T."/>
            <person name="Dalin E."/>
            <person name="Tice H."/>
            <person name="Pitluck S."/>
            <person name="Sims D."/>
            <person name="Brettin T."/>
            <person name="Bruce D."/>
            <person name="Detter J.C."/>
            <person name="Han C."/>
            <person name="Schmutz J."/>
            <person name="Larimer F."/>
            <person name="Land M."/>
            <person name="Hauser L."/>
            <person name="Kyrpides N."/>
            <person name="Mikhailova N."/>
            <person name="Brettar I."/>
            <person name="Rodrigues J."/>
            <person name="Konstantinidis K."/>
            <person name="Tiedje J."/>
            <person name="Richardson P."/>
        </authorList>
    </citation>
    <scope>NUCLEOTIDE SEQUENCE [LARGE SCALE GENOMIC DNA]</scope>
    <source>
        <strain>OS185</strain>
    </source>
</reference>